<evidence type="ECO:0000305" key="1"/>
<sequence>MTDSEHVGKTCQIDVLIEEHDERTRAKARLSWAGRQMVGVGLARLDPADEPVAQIGDELAIARALSDLANQLFALTSSDIEASTHQPVTGLHH</sequence>
<accession>P65034</accession>
<accession>A0A1R3Y1R9</accession>
<accession>P71931</accession>
<accession>X2BL77</accession>
<proteinExistence type="predicted"/>
<comment type="similarity">
    <text evidence="1">To M.tuberculosis Rv1738.</text>
</comment>
<feature type="chain" id="PRO_0000104073" description="Uncharacterized protein Mb2665c">
    <location>
        <begin position="1"/>
        <end position="93"/>
    </location>
</feature>
<reference key="1">
    <citation type="journal article" date="2003" name="Proc. Natl. Acad. Sci. U.S.A.">
        <title>The complete genome sequence of Mycobacterium bovis.</title>
        <authorList>
            <person name="Garnier T."/>
            <person name="Eiglmeier K."/>
            <person name="Camus J.-C."/>
            <person name="Medina N."/>
            <person name="Mansoor H."/>
            <person name="Pryor M."/>
            <person name="Duthoy S."/>
            <person name="Grondin S."/>
            <person name="Lacroix C."/>
            <person name="Monsempe C."/>
            <person name="Simon S."/>
            <person name="Harris B."/>
            <person name="Atkin R."/>
            <person name="Doggett J."/>
            <person name="Mayes R."/>
            <person name="Keating L."/>
            <person name="Wheeler P.R."/>
            <person name="Parkhill J."/>
            <person name="Barrell B.G."/>
            <person name="Cole S.T."/>
            <person name="Gordon S.V."/>
            <person name="Hewinson R.G."/>
        </authorList>
    </citation>
    <scope>NUCLEOTIDE SEQUENCE [LARGE SCALE GENOMIC DNA]</scope>
    <source>
        <strain>ATCC BAA-935 / AF2122/97</strain>
    </source>
</reference>
<reference key="2">
    <citation type="journal article" date="2017" name="Genome Announc.">
        <title>Updated reference genome sequence and annotation of Mycobacterium bovis AF2122/97.</title>
        <authorList>
            <person name="Malone K.M."/>
            <person name="Farrell D."/>
            <person name="Stuber T.P."/>
            <person name="Schubert O.T."/>
            <person name="Aebersold R."/>
            <person name="Robbe-Austerman S."/>
            <person name="Gordon S.V."/>
        </authorList>
    </citation>
    <scope>NUCLEOTIDE SEQUENCE [LARGE SCALE GENOMIC DNA]</scope>
    <scope>GENOME REANNOTATION</scope>
    <source>
        <strain>ATCC BAA-935 / AF2122/97</strain>
    </source>
</reference>
<dbReference type="EMBL" id="LT708304">
    <property type="protein sequence ID" value="SIU01283.1"/>
    <property type="molecule type" value="Genomic_DNA"/>
</dbReference>
<dbReference type="RefSeq" id="NP_856311.1">
    <property type="nucleotide sequence ID" value="NC_002945.3"/>
</dbReference>
<dbReference type="RefSeq" id="WP_003413619.1">
    <property type="nucleotide sequence ID" value="NC_002945.4"/>
</dbReference>
<dbReference type="SMR" id="P65034"/>
<dbReference type="KEGG" id="mbo:BQ2027_MB2665C"/>
<dbReference type="PATRIC" id="fig|233413.5.peg.2926"/>
<dbReference type="Proteomes" id="UP000001419">
    <property type="component" value="Chromosome"/>
</dbReference>
<dbReference type="Gene3D" id="3.30.160.240">
    <property type="entry name" value="Rv1738"/>
    <property type="match status" value="1"/>
</dbReference>
<dbReference type="InterPro" id="IPR015057">
    <property type="entry name" value="Rv2632c-like"/>
</dbReference>
<dbReference type="InterPro" id="IPR038070">
    <property type="entry name" value="Rv2632c-like_sf"/>
</dbReference>
<dbReference type="Pfam" id="PF08962">
    <property type="entry name" value="Rv2632c-like"/>
    <property type="match status" value="1"/>
</dbReference>
<dbReference type="SUPFAM" id="SSF143212">
    <property type="entry name" value="Rv2632c-like"/>
    <property type="match status" value="1"/>
</dbReference>
<name>Y2665_MYCBO</name>
<gene>
    <name type="ordered locus">BQ2027_MB2665C</name>
</gene>
<organism>
    <name type="scientific">Mycobacterium bovis (strain ATCC BAA-935 / AF2122/97)</name>
    <dbReference type="NCBI Taxonomy" id="233413"/>
    <lineage>
        <taxon>Bacteria</taxon>
        <taxon>Bacillati</taxon>
        <taxon>Actinomycetota</taxon>
        <taxon>Actinomycetes</taxon>
        <taxon>Mycobacteriales</taxon>
        <taxon>Mycobacteriaceae</taxon>
        <taxon>Mycobacterium</taxon>
        <taxon>Mycobacterium tuberculosis complex</taxon>
    </lineage>
</organism>
<protein>
    <recommendedName>
        <fullName>Uncharacterized protein Mb2665c</fullName>
    </recommendedName>
</protein>
<keyword id="KW-1185">Reference proteome</keyword>